<name>RS20_CAMLR</name>
<reference key="1">
    <citation type="journal article" date="2008" name="Foodborne Pathog. Dis.">
        <title>The complete genome sequence and analysis of the human pathogen Campylobacter lari.</title>
        <authorList>
            <person name="Miller W.G."/>
            <person name="Wang G."/>
            <person name="Binnewies T.T."/>
            <person name="Parker C.T."/>
        </authorList>
    </citation>
    <scope>NUCLEOTIDE SEQUENCE [LARGE SCALE GENOMIC DNA]</scope>
    <source>
        <strain>RM2100 / D67 / ATCC BAA-1060</strain>
    </source>
</reference>
<accession>B9KE99</accession>
<dbReference type="EMBL" id="CP000932">
    <property type="protein sequence ID" value="ACM63384.1"/>
    <property type="molecule type" value="Genomic_DNA"/>
</dbReference>
<dbReference type="RefSeq" id="WP_012660770.1">
    <property type="nucleotide sequence ID" value="NC_012039.1"/>
</dbReference>
<dbReference type="SMR" id="B9KE99"/>
<dbReference type="STRING" id="306263.Cla_0016"/>
<dbReference type="KEGG" id="cla:CLA_0016"/>
<dbReference type="PATRIC" id="fig|306263.5.peg.16"/>
<dbReference type="eggNOG" id="COG0268">
    <property type="taxonomic scope" value="Bacteria"/>
</dbReference>
<dbReference type="HOGENOM" id="CLU_160655_3_0_7"/>
<dbReference type="Proteomes" id="UP000007727">
    <property type="component" value="Chromosome"/>
</dbReference>
<dbReference type="GO" id="GO:0005829">
    <property type="term" value="C:cytosol"/>
    <property type="evidence" value="ECO:0007669"/>
    <property type="project" value="TreeGrafter"/>
</dbReference>
<dbReference type="GO" id="GO:0015935">
    <property type="term" value="C:small ribosomal subunit"/>
    <property type="evidence" value="ECO:0007669"/>
    <property type="project" value="TreeGrafter"/>
</dbReference>
<dbReference type="GO" id="GO:0070181">
    <property type="term" value="F:small ribosomal subunit rRNA binding"/>
    <property type="evidence" value="ECO:0007669"/>
    <property type="project" value="TreeGrafter"/>
</dbReference>
<dbReference type="GO" id="GO:0003735">
    <property type="term" value="F:structural constituent of ribosome"/>
    <property type="evidence" value="ECO:0007669"/>
    <property type="project" value="InterPro"/>
</dbReference>
<dbReference type="GO" id="GO:0006412">
    <property type="term" value="P:translation"/>
    <property type="evidence" value="ECO:0007669"/>
    <property type="project" value="UniProtKB-UniRule"/>
</dbReference>
<dbReference type="Gene3D" id="1.20.58.110">
    <property type="entry name" value="Ribosomal protein S20"/>
    <property type="match status" value="1"/>
</dbReference>
<dbReference type="HAMAP" id="MF_00500">
    <property type="entry name" value="Ribosomal_bS20"/>
    <property type="match status" value="1"/>
</dbReference>
<dbReference type="InterPro" id="IPR002583">
    <property type="entry name" value="Ribosomal_bS20"/>
</dbReference>
<dbReference type="InterPro" id="IPR036510">
    <property type="entry name" value="Ribosomal_bS20_sf"/>
</dbReference>
<dbReference type="NCBIfam" id="TIGR00029">
    <property type="entry name" value="S20"/>
    <property type="match status" value="1"/>
</dbReference>
<dbReference type="PANTHER" id="PTHR33398">
    <property type="entry name" value="30S RIBOSOMAL PROTEIN S20"/>
    <property type="match status" value="1"/>
</dbReference>
<dbReference type="PANTHER" id="PTHR33398:SF1">
    <property type="entry name" value="SMALL RIBOSOMAL SUBUNIT PROTEIN BS20C"/>
    <property type="match status" value="1"/>
</dbReference>
<dbReference type="Pfam" id="PF01649">
    <property type="entry name" value="Ribosomal_S20p"/>
    <property type="match status" value="1"/>
</dbReference>
<dbReference type="SUPFAM" id="SSF46992">
    <property type="entry name" value="Ribosomal protein S20"/>
    <property type="match status" value="1"/>
</dbReference>
<evidence type="ECO:0000255" key="1">
    <source>
        <dbReference type="HAMAP-Rule" id="MF_00500"/>
    </source>
</evidence>
<evidence type="ECO:0000256" key="2">
    <source>
        <dbReference type="SAM" id="MobiDB-lite"/>
    </source>
</evidence>
<evidence type="ECO:0000305" key="3"/>
<feature type="chain" id="PRO_1000194231" description="Small ribosomal subunit protein bS20">
    <location>
        <begin position="1"/>
        <end position="87"/>
    </location>
</feature>
<feature type="region of interest" description="Disordered" evidence="2">
    <location>
        <begin position="1"/>
        <end position="20"/>
    </location>
</feature>
<keyword id="KW-1185">Reference proteome</keyword>
<keyword id="KW-0687">Ribonucleoprotein</keyword>
<keyword id="KW-0689">Ribosomal protein</keyword>
<keyword id="KW-0694">RNA-binding</keyword>
<keyword id="KW-0699">rRNA-binding</keyword>
<sequence length="87" mass="9874">MANHKSAEKRARQTIKRTERNRFYRTRLKNITKAVREAAANNDKEAAANALKIANKSIHAMVSRGFLKKQTASRRVSRLALLVNKIA</sequence>
<comment type="function">
    <text evidence="1">Binds directly to 16S ribosomal RNA.</text>
</comment>
<comment type="similarity">
    <text evidence="1">Belongs to the bacterial ribosomal protein bS20 family.</text>
</comment>
<gene>
    <name evidence="1" type="primary">rpsT</name>
    <name type="ordered locus">Cla_0016</name>
</gene>
<protein>
    <recommendedName>
        <fullName evidence="1">Small ribosomal subunit protein bS20</fullName>
    </recommendedName>
    <alternativeName>
        <fullName evidence="3">30S ribosomal protein S20</fullName>
    </alternativeName>
</protein>
<organism>
    <name type="scientific">Campylobacter lari (strain RM2100 / D67 / ATCC BAA-1060)</name>
    <dbReference type="NCBI Taxonomy" id="306263"/>
    <lineage>
        <taxon>Bacteria</taxon>
        <taxon>Pseudomonadati</taxon>
        <taxon>Campylobacterota</taxon>
        <taxon>Epsilonproteobacteria</taxon>
        <taxon>Campylobacterales</taxon>
        <taxon>Campylobacteraceae</taxon>
        <taxon>Campylobacter</taxon>
    </lineage>
</organism>
<proteinExistence type="inferred from homology"/>